<evidence type="ECO:0000255" key="1"/>
<evidence type="ECO:0000305" key="2"/>
<comment type="subcellular location">
    <subcellularLocation>
        <location evidence="2">Cell membrane</location>
        <topology evidence="2">Multi-pass membrane protein</topology>
    </subcellularLocation>
</comment>
<comment type="similarity">
    <text evidence="2">Belongs to the UPF0324 family.</text>
</comment>
<accession>Q99WN6</accession>
<name>Y341_STAAM</name>
<protein>
    <recommendedName>
        <fullName>UPF0324 membrane protein SAV0341</fullName>
    </recommendedName>
</protein>
<reference key="1">
    <citation type="journal article" date="2001" name="Lancet">
        <title>Whole genome sequencing of meticillin-resistant Staphylococcus aureus.</title>
        <authorList>
            <person name="Kuroda M."/>
            <person name="Ohta T."/>
            <person name="Uchiyama I."/>
            <person name="Baba T."/>
            <person name="Yuzawa H."/>
            <person name="Kobayashi I."/>
            <person name="Cui L."/>
            <person name="Oguchi A."/>
            <person name="Aoki K."/>
            <person name="Nagai Y."/>
            <person name="Lian J.-Q."/>
            <person name="Ito T."/>
            <person name="Kanamori M."/>
            <person name="Matsumaru H."/>
            <person name="Maruyama A."/>
            <person name="Murakami H."/>
            <person name="Hosoyama A."/>
            <person name="Mizutani-Ui Y."/>
            <person name="Takahashi N.K."/>
            <person name="Sawano T."/>
            <person name="Inoue R."/>
            <person name="Kaito C."/>
            <person name="Sekimizu K."/>
            <person name="Hirakawa H."/>
            <person name="Kuhara S."/>
            <person name="Goto S."/>
            <person name="Yabuzaki J."/>
            <person name="Kanehisa M."/>
            <person name="Yamashita A."/>
            <person name="Oshima K."/>
            <person name="Furuya K."/>
            <person name="Yoshino C."/>
            <person name="Shiba T."/>
            <person name="Hattori M."/>
            <person name="Ogasawara N."/>
            <person name="Hayashi H."/>
            <person name="Hiramatsu K."/>
        </authorList>
    </citation>
    <scope>NUCLEOTIDE SEQUENCE [LARGE SCALE GENOMIC DNA]</scope>
    <source>
        <strain>Mu50 / ATCC 700699</strain>
    </source>
</reference>
<dbReference type="EMBL" id="BA000017">
    <property type="protein sequence ID" value="BAB56503.1"/>
    <property type="molecule type" value="Genomic_DNA"/>
</dbReference>
<dbReference type="RefSeq" id="WP_000157630.1">
    <property type="nucleotide sequence ID" value="NC_002758.2"/>
</dbReference>
<dbReference type="KEGG" id="sav:SAV0341"/>
<dbReference type="HOGENOM" id="CLU_033541_0_1_9"/>
<dbReference type="PhylomeDB" id="Q99WN6"/>
<dbReference type="Proteomes" id="UP000002481">
    <property type="component" value="Chromosome"/>
</dbReference>
<dbReference type="GO" id="GO:0005886">
    <property type="term" value="C:plasma membrane"/>
    <property type="evidence" value="ECO:0007669"/>
    <property type="project" value="UniProtKB-SubCell"/>
</dbReference>
<dbReference type="InterPro" id="IPR018383">
    <property type="entry name" value="UPF0324_pro"/>
</dbReference>
<dbReference type="PANTHER" id="PTHR30106">
    <property type="entry name" value="INNER MEMBRANE PROTEIN YEIH-RELATED"/>
    <property type="match status" value="1"/>
</dbReference>
<dbReference type="PANTHER" id="PTHR30106:SF2">
    <property type="entry name" value="UPF0324 INNER MEMBRANE PROTEIN YEIH"/>
    <property type="match status" value="1"/>
</dbReference>
<dbReference type="Pfam" id="PF03601">
    <property type="entry name" value="Cons_hypoth698"/>
    <property type="match status" value="1"/>
</dbReference>
<sequence length="331" mass="35768">MASLKNKHFMIGLSLTFIVALFSFLAAKLPILDKVGALTIAILIAILYRHFRGYPEQYSSGITFSSKYLLRFAIILYGLKLNIFDIIGQGSKLLAIDVGVVIFSIVMMLFVNKLLHGDKNIALLLGVGTGVCGAAAIAAVAPIFKSREKDTAISIGIIALIGTIFSLIYTAIYAIFSMTTNVYGAWSGVSLHEIAHVVLAGGFGGSDALKIALLGKLGRVFLLIPLTIVLILIMRFRSSESSSKGRISIPYFLIGFVIMALVNTYVTIPSVLLNILNTISTICLLMAMVALGLNVAFKDLKNRALKPLMTIIITSICLSSLAFIVVHWLYS</sequence>
<feature type="chain" id="PRO_0000157452" description="UPF0324 membrane protein SAV0341">
    <location>
        <begin position="1"/>
        <end position="331"/>
    </location>
</feature>
<feature type="transmembrane region" description="Helical" evidence="1">
    <location>
        <begin position="9"/>
        <end position="26"/>
    </location>
</feature>
<feature type="transmembrane region" description="Helical" evidence="1">
    <location>
        <begin position="31"/>
        <end position="48"/>
    </location>
</feature>
<feature type="transmembrane region" description="Helical" evidence="1">
    <location>
        <begin position="69"/>
        <end position="88"/>
    </location>
</feature>
<feature type="transmembrane region" description="Helical" evidence="1">
    <location>
        <begin position="93"/>
        <end position="115"/>
    </location>
</feature>
<feature type="transmembrane region" description="Helical" evidence="1">
    <location>
        <begin position="122"/>
        <end position="144"/>
    </location>
</feature>
<feature type="transmembrane region" description="Helical" evidence="1">
    <location>
        <begin position="154"/>
        <end position="176"/>
    </location>
</feature>
<feature type="transmembrane region" description="Helical" evidence="1">
    <location>
        <begin position="183"/>
        <end position="202"/>
    </location>
</feature>
<feature type="transmembrane region" description="Helical" evidence="1">
    <location>
        <begin position="217"/>
        <end position="234"/>
    </location>
</feature>
<feature type="transmembrane region" description="Helical" evidence="1">
    <location>
        <begin position="247"/>
        <end position="269"/>
    </location>
</feature>
<feature type="transmembrane region" description="Helical" evidence="1">
    <location>
        <begin position="273"/>
        <end position="295"/>
    </location>
</feature>
<feature type="transmembrane region" description="Helical" evidence="1">
    <location>
        <begin position="308"/>
        <end position="330"/>
    </location>
</feature>
<gene>
    <name type="ordered locus">SAV0341</name>
</gene>
<keyword id="KW-1003">Cell membrane</keyword>
<keyword id="KW-0472">Membrane</keyword>
<keyword id="KW-0812">Transmembrane</keyword>
<keyword id="KW-1133">Transmembrane helix</keyword>
<proteinExistence type="inferred from homology"/>
<organism>
    <name type="scientific">Staphylococcus aureus (strain Mu50 / ATCC 700699)</name>
    <dbReference type="NCBI Taxonomy" id="158878"/>
    <lineage>
        <taxon>Bacteria</taxon>
        <taxon>Bacillati</taxon>
        <taxon>Bacillota</taxon>
        <taxon>Bacilli</taxon>
        <taxon>Bacillales</taxon>
        <taxon>Staphylococcaceae</taxon>
        <taxon>Staphylococcus</taxon>
    </lineage>
</organism>